<evidence type="ECO:0000256" key="1">
    <source>
        <dbReference type="SAM" id="MobiDB-lite"/>
    </source>
</evidence>
<evidence type="ECO:0000269" key="2">
    <source>
    </source>
</evidence>
<evidence type="ECO:0000269" key="3">
    <source>
    </source>
</evidence>
<evidence type="ECO:0000305" key="4"/>
<keyword id="KW-0808">Transferase</keyword>
<feature type="chain" id="PRO_0000442637" description="4'-phosphopantetheinyl transferase Svp">
    <location>
        <begin position="1"/>
        <end position="246"/>
    </location>
</feature>
<feature type="region of interest" description="Disordered" evidence="1">
    <location>
        <begin position="223"/>
        <end position="246"/>
    </location>
</feature>
<feature type="compositionally biased region" description="Low complexity" evidence="1">
    <location>
        <begin position="223"/>
        <end position="232"/>
    </location>
</feature>
<feature type="compositionally biased region" description="Basic and acidic residues" evidence="1">
    <location>
        <begin position="233"/>
        <end position="246"/>
    </location>
</feature>
<dbReference type="EC" id="2.7.8.7" evidence="2 3"/>
<dbReference type="EMBL" id="AF210311">
    <property type="protein sequence ID" value="AAG43513.1"/>
    <property type="molecule type" value="Genomic_DNA"/>
</dbReference>
<dbReference type="RefSeq" id="WP_004954939.1">
    <property type="nucleotide sequence ID" value="NZ_VOKX01000009.1"/>
</dbReference>
<dbReference type="SMR" id="Q9F0Q6"/>
<dbReference type="OrthoDB" id="8210607at2"/>
<dbReference type="GO" id="GO:0009366">
    <property type="term" value="C:enterobactin synthetase complex"/>
    <property type="evidence" value="ECO:0007669"/>
    <property type="project" value="InterPro"/>
</dbReference>
<dbReference type="GO" id="GO:0005886">
    <property type="term" value="C:plasma membrane"/>
    <property type="evidence" value="ECO:0007669"/>
    <property type="project" value="TreeGrafter"/>
</dbReference>
<dbReference type="GO" id="GO:0008897">
    <property type="term" value="F:holo-[acyl-carrier-protein] synthase activity"/>
    <property type="evidence" value="ECO:0007669"/>
    <property type="project" value="UniProtKB-EC"/>
</dbReference>
<dbReference type="GO" id="GO:0000287">
    <property type="term" value="F:magnesium ion binding"/>
    <property type="evidence" value="ECO:0007669"/>
    <property type="project" value="InterPro"/>
</dbReference>
<dbReference type="GO" id="GO:0009239">
    <property type="term" value="P:enterobactin biosynthetic process"/>
    <property type="evidence" value="ECO:0007669"/>
    <property type="project" value="InterPro"/>
</dbReference>
<dbReference type="InterPro" id="IPR008278">
    <property type="entry name" value="4-PPantetheinyl_Trfase_dom"/>
</dbReference>
<dbReference type="InterPro" id="IPR037143">
    <property type="entry name" value="4-PPantetheinyl_Trfase_dom_sf"/>
</dbReference>
<dbReference type="InterPro" id="IPR041354">
    <property type="entry name" value="4PPT_N"/>
</dbReference>
<dbReference type="InterPro" id="IPR003542">
    <property type="entry name" value="Enbac_synth_compD-like"/>
</dbReference>
<dbReference type="PANTHER" id="PTHR38096">
    <property type="entry name" value="ENTEROBACTIN SYNTHASE COMPONENT D"/>
    <property type="match status" value="1"/>
</dbReference>
<dbReference type="PANTHER" id="PTHR38096:SF1">
    <property type="entry name" value="ENTEROBACTIN SYNTHASE COMPONENT D"/>
    <property type="match status" value="1"/>
</dbReference>
<dbReference type="Pfam" id="PF17837">
    <property type="entry name" value="4PPT_N"/>
    <property type="match status" value="1"/>
</dbReference>
<dbReference type="Pfam" id="PF01648">
    <property type="entry name" value="ACPS"/>
    <property type="match status" value="1"/>
</dbReference>
<dbReference type="PRINTS" id="PR01399">
    <property type="entry name" value="ENTSNTHTASED"/>
</dbReference>
<dbReference type="SUPFAM" id="SSF56214">
    <property type="entry name" value="4'-phosphopantetheinyl transferase"/>
    <property type="match status" value="1"/>
</dbReference>
<reference key="1">
    <citation type="journal article" date="2001" name="Chem. Biol.">
        <title>Cloning and characterization of a phosphopantetheinyl transferase from Streptomyces verticillus ATCC15003, the producer of the hybrid peptide-polyketide antitumor drug bleomycin.</title>
        <authorList>
            <person name="Sanchez C."/>
            <person name="Du L."/>
            <person name="Edwards D.J."/>
            <person name="Toney M.D."/>
            <person name="Shen B."/>
        </authorList>
    </citation>
    <scope>NUCLEOTIDE SEQUENCE [GENOMIC DNA]</scope>
    <scope>FUNCTION</scope>
    <scope>CATALYTIC ACTIVITY</scope>
    <scope>BIOPHYSICOCHEMICAL PROPERTIES</scope>
    <source>
        <strain>ATCC 15003 / DSM 40903 / B-80-Z2</strain>
    </source>
</reference>
<reference key="2">
    <citation type="journal article" date="2008" name="Fungal Genet. Biol.">
        <title>Characterization of the atromentin biosynthesis genes and enzymes in the homobasidiomycete Tapinella panuoides.</title>
        <authorList>
            <person name="Schneider P."/>
            <person name="Bouhired S."/>
            <person name="Hoffmeister D."/>
        </authorList>
    </citation>
    <scope>CATALYTIC ACTIVITY</scope>
</reference>
<name>PPTA_STRMB</name>
<comment type="function">
    <text evidence="2 3">Transfers the 4'-phosphopantetheine moiety from coenzyme A to a Ser of an acyl-carrier-protein. The enzyme is able to transfer the cofactor to a broad range of enzymes with acyl- or peptidyl-carrier protein domains.</text>
</comment>
<comment type="catalytic activity">
    <reaction evidence="2 3">
        <text>apo-[ACP] + CoA = holo-[ACP] + adenosine 3',5'-bisphosphate + H(+)</text>
        <dbReference type="Rhea" id="RHEA:12068"/>
        <dbReference type="Rhea" id="RHEA-COMP:9685"/>
        <dbReference type="Rhea" id="RHEA-COMP:9690"/>
        <dbReference type="ChEBI" id="CHEBI:15378"/>
        <dbReference type="ChEBI" id="CHEBI:29999"/>
        <dbReference type="ChEBI" id="CHEBI:57287"/>
        <dbReference type="ChEBI" id="CHEBI:58343"/>
        <dbReference type="ChEBI" id="CHEBI:64479"/>
        <dbReference type="EC" id="2.7.8.7"/>
    </reaction>
</comment>
<comment type="biophysicochemical properties">
    <kinetics>
        <KM evidence="2">3.9 uM for Streptomyces mobaraensis apo-PCP BlmI</KM>
        <KM evidence="2">3.1 uM for Streptomyces glaucescens apo-ACP TcmM</KM>
        <text evidence="2">kcat is 11 min(-1) with S.mobaraensis apo-PCP BlmI as substrate and 86 min(-1) with S.glaucescens apo-ACP TcmM as substrate.</text>
    </kinetics>
</comment>
<comment type="similarity">
    <text evidence="4">Belongs to the P-Pant transferase superfamily. Gsp/Sfp/HetI/AcpT family.</text>
</comment>
<organism>
    <name type="scientific">Streptomyces mobaraensis</name>
    <name type="common">Streptoverticillium mobaraense</name>
    <dbReference type="NCBI Taxonomy" id="35621"/>
    <lineage>
        <taxon>Bacteria</taxon>
        <taxon>Bacillati</taxon>
        <taxon>Actinomycetota</taxon>
        <taxon>Actinomycetes</taxon>
        <taxon>Kitasatosporales</taxon>
        <taxon>Streptomycetaceae</taxon>
        <taxon>Streptomyces</taxon>
    </lineage>
</organism>
<protein>
    <recommendedName>
        <fullName>4'-phosphopantetheinyl transferase Svp</fullName>
        <shortName>PPTase</shortName>
        <ecNumber evidence="2 3">2.7.8.7</ecNumber>
    </recommendedName>
</protein>
<gene>
    <name type="primary">svp</name>
</gene>
<proteinExistence type="evidence at protein level"/>
<sequence>MIAALLPSWAVTEHAFTDAPDDPVSLLFPEEAAHVARAVPKRLHEFATVRVCARAALGRLGLPPGPLLPGRRGAPSWPDGVVGSMTHCQGFRGAAVARAADAASLGIDAEPNGPLPDGVLAMVSLPSEREWLAGLAARRPDVHWDRLLFSAKESVFKAWYPLTGLELDFDEAELAVDPDAGTFTARLLVPGPVVGGRRLDGFEGRWAAGEGLVVTAIAVAAPAGTAEESAEGAGKEATADDRTAVP</sequence>
<accession>Q9F0Q6</accession>